<proteinExistence type="evidence at transcript level"/>
<evidence type="ECO:0000250" key="1">
    <source>
        <dbReference type="UniProtKB" id="G5EEG7"/>
    </source>
</evidence>
<evidence type="ECO:0000250" key="2">
    <source>
        <dbReference type="UniProtKB" id="Q2TAY7"/>
    </source>
</evidence>
<evidence type="ECO:0000250" key="3">
    <source>
        <dbReference type="UniProtKB" id="Q76B40"/>
    </source>
</evidence>
<evidence type="ECO:0000250" key="4">
    <source>
        <dbReference type="UniProtKB" id="Q99M63"/>
    </source>
</evidence>
<evidence type="ECO:0000255" key="5"/>
<evidence type="ECO:0000255" key="6">
    <source>
        <dbReference type="PROSITE-ProRule" id="PRU00058"/>
    </source>
</evidence>
<evidence type="ECO:0000255" key="7">
    <source>
        <dbReference type="PROSITE-ProRule" id="PRU00126"/>
    </source>
</evidence>
<evidence type="ECO:0000305" key="8"/>
<gene>
    <name type="primary">smu1</name>
    <name type="ORF">zgc:56147</name>
</gene>
<dbReference type="EMBL" id="BC045945">
    <property type="protein sequence ID" value="AAH45945.1"/>
    <property type="molecule type" value="mRNA"/>
</dbReference>
<dbReference type="RefSeq" id="NP_956493.1">
    <property type="nucleotide sequence ID" value="NM_200199.1"/>
</dbReference>
<dbReference type="SMR" id="Q7ZVA0"/>
<dbReference type="FunCoup" id="Q7ZVA0">
    <property type="interactions" value="2650"/>
</dbReference>
<dbReference type="STRING" id="7955.ENSDARP00000089117"/>
<dbReference type="PaxDb" id="7955-ENSDARP00000089117"/>
<dbReference type="GeneID" id="393168"/>
<dbReference type="KEGG" id="dre:393168"/>
<dbReference type="AGR" id="ZFIN:ZDB-GENE-040426-916"/>
<dbReference type="CTD" id="393168"/>
<dbReference type="ZFIN" id="ZDB-GENE-040426-916">
    <property type="gene designation" value="smu1a"/>
</dbReference>
<dbReference type="eggNOG" id="KOG0275">
    <property type="taxonomic scope" value="Eukaryota"/>
</dbReference>
<dbReference type="InParanoid" id="Q7ZVA0"/>
<dbReference type="OrthoDB" id="538223at2759"/>
<dbReference type="PhylomeDB" id="Q7ZVA0"/>
<dbReference type="PRO" id="PR:Q7ZVA0"/>
<dbReference type="Proteomes" id="UP000000437">
    <property type="component" value="Chromosome 14"/>
</dbReference>
<dbReference type="GO" id="GO:0005737">
    <property type="term" value="C:cytoplasm"/>
    <property type="evidence" value="ECO:0007669"/>
    <property type="project" value="UniProtKB-SubCell"/>
</dbReference>
<dbReference type="GO" id="GO:0016607">
    <property type="term" value="C:nuclear speck"/>
    <property type="evidence" value="ECO:0000250"/>
    <property type="project" value="UniProtKB"/>
</dbReference>
<dbReference type="GO" id="GO:0005634">
    <property type="term" value="C:nucleus"/>
    <property type="evidence" value="ECO:0000250"/>
    <property type="project" value="UniProtKB"/>
</dbReference>
<dbReference type="GO" id="GO:0071011">
    <property type="term" value="C:precatalytic spliceosome"/>
    <property type="evidence" value="ECO:0000318"/>
    <property type="project" value="GO_Central"/>
</dbReference>
<dbReference type="GO" id="GO:0071005">
    <property type="term" value="C:U2-type precatalytic spliceosome"/>
    <property type="evidence" value="ECO:0000250"/>
    <property type="project" value="UniProtKB"/>
</dbReference>
<dbReference type="GO" id="GO:0000398">
    <property type="term" value="P:mRNA splicing, via spliceosome"/>
    <property type="evidence" value="ECO:0000250"/>
    <property type="project" value="UniProtKB"/>
</dbReference>
<dbReference type="GO" id="GO:0000381">
    <property type="term" value="P:regulation of alternative mRNA splicing, via spliceosome"/>
    <property type="evidence" value="ECO:0000250"/>
    <property type="project" value="UniProtKB"/>
</dbReference>
<dbReference type="GO" id="GO:0008380">
    <property type="term" value="P:RNA splicing"/>
    <property type="evidence" value="ECO:0000318"/>
    <property type="project" value="GO_Central"/>
</dbReference>
<dbReference type="CDD" id="cd00200">
    <property type="entry name" value="WD40"/>
    <property type="match status" value="1"/>
</dbReference>
<dbReference type="FunFam" id="2.130.10.10:FF:000082">
    <property type="entry name" value="WD40 repeat-containing protein SMU1"/>
    <property type="match status" value="1"/>
</dbReference>
<dbReference type="FunFam" id="2.130.10.10:FF:000289">
    <property type="entry name" value="WD40 repeat-containing protein SMU1"/>
    <property type="match status" value="1"/>
</dbReference>
<dbReference type="Gene3D" id="2.130.10.10">
    <property type="entry name" value="YVTN repeat-like/Quinoprotein amine dehydrogenase"/>
    <property type="match status" value="1"/>
</dbReference>
<dbReference type="InterPro" id="IPR006595">
    <property type="entry name" value="CTLH_C"/>
</dbReference>
<dbReference type="InterPro" id="IPR020472">
    <property type="entry name" value="G-protein_beta_WD-40_rep"/>
</dbReference>
<dbReference type="InterPro" id="IPR006594">
    <property type="entry name" value="LisH"/>
</dbReference>
<dbReference type="InterPro" id="IPR045184">
    <property type="entry name" value="SMU1"/>
</dbReference>
<dbReference type="InterPro" id="IPR054532">
    <property type="entry name" value="TPL_SMU1_LisH-like"/>
</dbReference>
<dbReference type="InterPro" id="IPR015943">
    <property type="entry name" value="WD40/YVTN_repeat-like_dom_sf"/>
</dbReference>
<dbReference type="InterPro" id="IPR019775">
    <property type="entry name" value="WD40_repeat_CS"/>
</dbReference>
<dbReference type="InterPro" id="IPR036322">
    <property type="entry name" value="WD40_repeat_dom_sf"/>
</dbReference>
<dbReference type="InterPro" id="IPR001680">
    <property type="entry name" value="WD40_rpt"/>
</dbReference>
<dbReference type="PANTHER" id="PTHR22848">
    <property type="entry name" value="WD40 REPEAT PROTEIN"/>
    <property type="match status" value="1"/>
</dbReference>
<dbReference type="Pfam" id="PF17814">
    <property type="entry name" value="LisH_TPL"/>
    <property type="match status" value="1"/>
</dbReference>
<dbReference type="Pfam" id="PF00400">
    <property type="entry name" value="WD40"/>
    <property type="match status" value="5"/>
</dbReference>
<dbReference type="PRINTS" id="PR00320">
    <property type="entry name" value="GPROTEINBRPT"/>
</dbReference>
<dbReference type="SMART" id="SM00668">
    <property type="entry name" value="CTLH"/>
    <property type="match status" value="1"/>
</dbReference>
<dbReference type="SMART" id="SM00667">
    <property type="entry name" value="LisH"/>
    <property type="match status" value="1"/>
</dbReference>
<dbReference type="SMART" id="SM00320">
    <property type="entry name" value="WD40"/>
    <property type="match status" value="7"/>
</dbReference>
<dbReference type="SUPFAM" id="SSF50978">
    <property type="entry name" value="WD40 repeat-like"/>
    <property type="match status" value="1"/>
</dbReference>
<dbReference type="PROSITE" id="PS50897">
    <property type="entry name" value="CTLH"/>
    <property type="match status" value="1"/>
</dbReference>
<dbReference type="PROSITE" id="PS50896">
    <property type="entry name" value="LISH"/>
    <property type="match status" value="1"/>
</dbReference>
<dbReference type="PROSITE" id="PS00678">
    <property type="entry name" value="WD_REPEATS_1"/>
    <property type="match status" value="2"/>
</dbReference>
<dbReference type="PROSITE" id="PS50082">
    <property type="entry name" value="WD_REPEATS_2"/>
    <property type="match status" value="5"/>
</dbReference>
<dbReference type="PROSITE" id="PS50294">
    <property type="entry name" value="WD_REPEATS_REGION"/>
    <property type="match status" value="1"/>
</dbReference>
<organism>
    <name type="scientific">Danio rerio</name>
    <name type="common">Zebrafish</name>
    <name type="synonym">Brachydanio rerio</name>
    <dbReference type="NCBI Taxonomy" id="7955"/>
    <lineage>
        <taxon>Eukaryota</taxon>
        <taxon>Metazoa</taxon>
        <taxon>Chordata</taxon>
        <taxon>Craniata</taxon>
        <taxon>Vertebrata</taxon>
        <taxon>Euteleostomi</taxon>
        <taxon>Actinopterygii</taxon>
        <taxon>Neopterygii</taxon>
        <taxon>Teleostei</taxon>
        <taxon>Ostariophysi</taxon>
        <taxon>Cypriniformes</taxon>
        <taxon>Danionidae</taxon>
        <taxon>Danioninae</taxon>
        <taxon>Danio</taxon>
    </lineage>
</organism>
<sequence length="513" mass="57531">MSIEIESADVIRLIMQYLKENSLHRTLAMLQEETTVSLNTVDSIESFVADINSGHWDTVLQAIQSLKLPDKTLIDLYEQVVLELIELRELGAARSLLRQTDPMIMLKQTQPERYIHLENLLARSYFDPREAYPDGSSKEKRRAAIAQALAGEVSVVPPSRLMALLGQSLKWQQHQGLLPPGMTIDLFRGKAAVKDVEEERFPTQLARHIKFGQKSHVECARFSPDGQYLVTGSVDGFIEVWNFTTGKIRKDLKYQAQDNFMMMDDAVLCMSFSRDTEMLATGAQDGKIKVWKIQSGQCLRRYERAHSKGVTCLSFSKDSTQILSASFDQTIRIHGLKSGKCLKEFRGHSSFVNEATLTPDGHHAISASSDGTVKVWNMKTTECTSTFKSLGTSAGTDITVNNVILLPKNPEHFVVCNRSNTVVIMNMQGQIVRSFSSGKREGGDFVCCTLSPRGEWIYCVGEDYVLYCFSTVTGKLERTLTVHEKDVIGIAHHPHQNLIGTYSEDGLLKLWKP</sequence>
<comment type="function">
    <text evidence="2 3">Involved in pre-mRNA splicing as a component of the spliceosome (By similarity). Required for normal accumulation of ik (By similarity). Required for normal mitotic spindle assembly and normal progress through mitosis (By similarity).</text>
</comment>
<comment type="subunit">
    <text evidence="2">Component of the spliceosome B complex. Interacts with ik.</text>
</comment>
<comment type="subcellular location">
    <subcellularLocation>
        <location evidence="4">Cytoplasm</location>
    </subcellularLocation>
    <subcellularLocation>
        <location evidence="3">Nucleus</location>
    </subcellularLocation>
    <subcellularLocation>
        <location evidence="3">Nucleus speckle</location>
    </subcellularLocation>
    <text evidence="3">Colocalizes with srsf1 in nuclear speckles.</text>
</comment>
<comment type="domain">
    <text evidence="1">The WD repeats assemble into a seven-bladed WD propeller.</text>
</comment>
<comment type="similarity">
    <text evidence="8">Belongs to the WD repeat SMU1 family.</text>
</comment>
<name>SMU1_DANRE</name>
<feature type="chain" id="PRO_0000237594" description="WD40 repeat-containing protein SMU1">
    <location>
        <begin position="1"/>
        <end position="513"/>
    </location>
</feature>
<feature type="domain" description="LisH" evidence="7">
    <location>
        <begin position="6"/>
        <end position="38"/>
    </location>
</feature>
<feature type="domain" description="CTLH" evidence="6">
    <location>
        <begin position="40"/>
        <end position="92"/>
    </location>
</feature>
<feature type="repeat" description="WD 1" evidence="5">
    <location>
        <begin position="212"/>
        <end position="253"/>
    </location>
</feature>
<feature type="repeat" description="WD 2" evidence="5">
    <location>
        <begin position="262"/>
        <end position="303"/>
    </location>
</feature>
<feature type="repeat" description="WD 3" evidence="5">
    <location>
        <begin position="305"/>
        <end position="346"/>
    </location>
</feature>
<feature type="repeat" description="WD 4" evidence="5">
    <location>
        <begin position="347"/>
        <end position="386"/>
    </location>
</feature>
<feature type="repeat" description="WD 5" evidence="5">
    <location>
        <begin position="395"/>
        <end position="436"/>
    </location>
</feature>
<feature type="repeat" description="WD 6" evidence="5">
    <location>
        <begin position="440"/>
        <end position="479"/>
    </location>
</feature>
<feature type="repeat" description="WD 7" evidence="5">
    <location>
        <begin position="482"/>
        <end position="513"/>
    </location>
</feature>
<feature type="region of interest" description="Required for interaction with ik" evidence="2">
    <location>
        <begin position="1"/>
        <end position="315"/>
    </location>
</feature>
<accession>Q7ZVA0</accession>
<keyword id="KW-0963">Cytoplasm</keyword>
<keyword id="KW-0507">mRNA processing</keyword>
<keyword id="KW-0508">mRNA splicing</keyword>
<keyword id="KW-0539">Nucleus</keyword>
<keyword id="KW-1185">Reference proteome</keyword>
<keyword id="KW-0677">Repeat</keyword>
<keyword id="KW-0747">Spliceosome</keyword>
<keyword id="KW-0853">WD repeat</keyword>
<protein>
    <recommendedName>
        <fullName>WD40 repeat-containing protein SMU1</fullName>
    </recommendedName>
    <alternativeName>
        <fullName>Smu-1 suppressor of mec-8 and unc-52 protein homolog</fullName>
    </alternativeName>
</protein>
<reference key="1">
    <citation type="submission" date="2003-01" db="EMBL/GenBank/DDBJ databases">
        <authorList>
            <consortium name="NIH - Zebrafish Gene Collection (ZGC) project"/>
        </authorList>
    </citation>
    <scope>NUCLEOTIDE SEQUENCE [LARGE SCALE MRNA]</scope>
    <source>
        <strain>SJD</strain>
    </source>
</reference>